<sequence length="326" mass="34675">MNQSVTRPRPDAKALGKVGVLYGGRSAERDVSLMSGKGVHQALLSAGVDAHLFDTGERTLAELAAAGFDRVFIALHGRYGEDGTLQGALELLGLPYTGSGPMASSLSMDKIMTKRVWLQHGLRTPAFEVLDAQAELRTVPDRLGLPLILKPPHEGSTVGITKVAGYSDMKEGYAQAAKFDDEVLAEQFIAGRELTVAVLGTGAAAHALPVIEIVAPGGNYDYEHKYFSDETQYFCPADLPDAVAAEVADLAVRAYRALGCAGWGRIDFMLDADNRPWLLEANTSPGMTSHSLVPMAAKAIGMSYAELCVSIVSEAACKVHSPARNS</sequence>
<protein>
    <recommendedName>
        <fullName evidence="2">D-alanine--D-alanine ligase</fullName>
        <ecNumber evidence="2">6.3.2.4</ecNumber>
    </recommendedName>
    <alternativeName>
        <fullName evidence="2">D-Ala-D-Ala ligase</fullName>
    </alternativeName>
    <alternativeName>
        <fullName evidence="2">D-alanylalanine synthetase</fullName>
    </alternativeName>
</protein>
<reference key="1">
    <citation type="journal article" date="2008" name="BMC Genomics">
        <title>The missing link: Bordetella petrii is endowed with both the metabolic versatility of environmental bacteria and virulence traits of pathogenic Bordetellae.</title>
        <authorList>
            <person name="Gross R."/>
            <person name="Guzman C.A."/>
            <person name="Sebaihia M."/>
            <person name="Martin dos Santos V.A.P."/>
            <person name="Pieper D.H."/>
            <person name="Koebnik R."/>
            <person name="Lechner M."/>
            <person name="Bartels D."/>
            <person name="Buhrmester J."/>
            <person name="Choudhuri J.V."/>
            <person name="Ebensen T."/>
            <person name="Gaigalat L."/>
            <person name="Herrmann S."/>
            <person name="Khachane A.N."/>
            <person name="Larisch C."/>
            <person name="Link S."/>
            <person name="Linke B."/>
            <person name="Meyer F."/>
            <person name="Mormann S."/>
            <person name="Nakunst D."/>
            <person name="Rueckert C."/>
            <person name="Schneiker-Bekel S."/>
            <person name="Schulze K."/>
            <person name="Voerholter F.-J."/>
            <person name="Yevsa T."/>
            <person name="Engle J.T."/>
            <person name="Goldman W.E."/>
            <person name="Puehler A."/>
            <person name="Goebel U.B."/>
            <person name="Goesmann A."/>
            <person name="Bloecker H."/>
            <person name="Kaiser O."/>
            <person name="Martinez-Arias R."/>
        </authorList>
    </citation>
    <scope>NUCLEOTIDE SEQUENCE [LARGE SCALE GENOMIC DNA]</scope>
    <source>
        <strain>ATCC BAA-461 / DSM 12804 / CCUG 43448</strain>
    </source>
</reference>
<gene>
    <name evidence="2" type="primary">ddl</name>
    <name type="ordered locus">Bpet0699</name>
</gene>
<name>DDL_BORPD</name>
<dbReference type="EC" id="6.3.2.4" evidence="2"/>
<dbReference type="EMBL" id="AM902716">
    <property type="protein sequence ID" value="CAP41031.1"/>
    <property type="molecule type" value="Genomic_DNA"/>
</dbReference>
<dbReference type="SMR" id="A9I4V9"/>
<dbReference type="STRING" id="94624.Bpet0699"/>
<dbReference type="KEGG" id="bpt:Bpet0699"/>
<dbReference type="eggNOG" id="COG1181">
    <property type="taxonomic scope" value="Bacteria"/>
</dbReference>
<dbReference type="UniPathway" id="UPA00219"/>
<dbReference type="Proteomes" id="UP000001225">
    <property type="component" value="Chromosome"/>
</dbReference>
<dbReference type="GO" id="GO:0005829">
    <property type="term" value="C:cytosol"/>
    <property type="evidence" value="ECO:0007669"/>
    <property type="project" value="TreeGrafter"/>
</dbReference>
<dbReference type="GO" id="GO:0005524">
    <property type="term" value="F:ATP binding"/>
    <property type="evidence" value="ECO:0007669"/>
    <property type="project" value="UniProtKB-KW"/>
</dbReference>
<dbReference type="GO" id="GO:0008716">
    <property type="term" value="F:D-alanine-D-alanine ligase activity"/>
    <property type="evidence" value="ECO:0007669"/>
    <property type="project" value="UniProtKB-UniRule"/>
</dbReference>
<dbReference type="GO" id="GO:0046872">
    <property type="term" value="F:metal ion binding"/>
    <property type="evidence" value="ECO:0007669"/>
    <property type="project" value="UniProtKB-KW"/>
</dbReference>
<dbReference type="GO" id="GO:0071555">
    <property type="term" value="P:cell wall organization"/>
    <property type="evidence" value="ECO:0007669"/>
    <property type="project" value="UniProtKB-KW"/>
</dbReference>
<dbReference type="GO" id="GO:0009252">
    <property type="term" value="P:peptidoglycan biosynthetic process"/>
    <property type="evidence" value="ECO:0007669"/>
    <property type="project" value="UniProtKB-UniRule"/>
</dbReference>
<dbReference type="GO" id="GO:0008360">
    <property type="term" value="P:regulation of cell shape"/>
    <property type="evidence" value="ECO:0007669"/>
    <property type="project" value="UniProtKB-KW"/>
</dbReference>
<dbReference type="FunFam" id="3.30.470.20:FF:000008">
    <property type="entry name" value="D-alanine--D-alanine ligase"/>
    <property type="match status" value="1"/>
</dbReference>
<dbReference type="FunFam" id="3.40.50.20:FF:000013">
    <property type="entry name" value="D-alanine--D-alanine ligase"/>
    <property type="match status" value="1"/>
</dbReference>
<dbReference type="Gene3D" id="3.40.50.20">
    <property type="match status" value="1"/>
</dbReference>
<dbReference type="Gene3D" id="3.30.1490.20">
    <property type="entry name" value="ATP-grasp fold, A domain"/>
    <property type="match status" value="1"/>
</dbReference>
<dbReference type="Gene3D" id="3.30.470.20">
    <property type="entry name" value="ATP-grasp fold, B domain"/>
    <property type="match status" value="1"/>
</dbReference>
<dbReference type="HAMAP" id="MF_00047">
    <property type="entry name" value="Dala_Dala_lig"/>
    <property type="match status" value="1"/>
</dbReference>
<dbReference type="InterPro" id="IPR011761">
    <property type="entry name" value="ATP-grasp"/>
</dbReference>
<dbReference type="InterPro" id="IPR013815">
    <property type="entry name" value="ATP_grasp_subdomain_1"/>
</dbReference>
<dbReference type="InterPro" id="IPR000291">
    <property type="entry name" value="D-Ala_lig_Van_CS"/>
</dbReference>
<dbReference type="InterPro" id="IPR005905">
    <property type="entry name" value="D_ala_D_ala"/>
</dbReference>
<dbReference type="InterPro" id="IPR011095">
    <property type="entry name" value="Dala_Dala_lig_C"/>
</dbReference>
<dbReference type="InterPro" id="IPR011127">
    <property type="entry name" value="Dala_Dala_lig_N"/>
</dbReference>
<dbReference type="InterPro" id="IPR016185">
    <property type="entry name" value="PreATP-grasp_dom_sf"/>
</dbReference>
<dbReference type="NCBIfam" id="TIGR01205">
    <property type="entry name" value="D_ala_D_alaTIGR"/>
    <property type="match status" value="1"/>
</dbReference>
<dbReference type="NCBIfam" id="NF002378">
    <property type="entry name" value="PRK01372.1"/>
    <property type="match status" value="1"/>
</dbReference>
<dbReference type="PANTHER" id="PTHR23132">
    <property type="entry name" value="D-ALANINE--D-ALANINE LIGASE"/>
    <property type="match status" value="1"/>
</dbReference>
<dbReference type="PANTHER" id="PTHR23132:SF23">
    <property type="entry name" value="D-ALANINE--D-ALANINE LIGASE B"/>
    <property type="match status" value="1"/>
</dbReference>
<dbReference type="Pfam" id="PF07478">
    <property type="entry name" value="Dala_Dala_lig_C"/>
    <property type="match status" value="1"/>
</dbReference>
<dbReference type="Pfam" id="PF01820">
    <property type="entry name" value="Dala_Dala_lig_N"/>
    <property type="match status" value="1"/>
</dbReference>
<dbReference type="PIRSF" id="PIRSF039102">
    <property type="entry name" value="Ddl/VanB"/>
    <property type="match status" value="1"/>
</dbReference>
<dbReference type="SUPFAM" id="SSF56059">
    <property type="entry name" value="Glutathione synthetase ATP-binding domain-like"/>
    <property type="match status" value="1"/>
</dbReference>
<dbReference type="SUPFAM" id="SSF52440">
    <property type="entry name" value="PreATP-grasp domain"/>
    <property type="match status" value="1"/>
</dbReference>
<dbReference type="PROSITE" id="PS50975">
    <property type="entry name" value="ATP_GRASP"/>
    <property type="match status" value="1"/>
</dbReference>
<dbReference type="PROSITE" id="PS00843">
    <property type="entry name" value="DALA_DALA_LIGASE_1"/>
    <property type="match status" value="1"/>
</dbReference>
<dbReference type="PROSITE" id="PS00844">
    <property type="entry name" value="DALA_DALA_LIGASE_2"/>
    <property type="match status" value="1"/>
</dbReference>
<accession>A9I4V9</accession>
<keyword id="KW-0067">ATP-binding</keyword>
<keyword id="KW-0133">Cell shape</keyword>
<keyword id="KW-0961">Cell wall biogenesis/degradation</keyword>
<keyword id="KW-0963">Cytoplasm</keyword>
<keyword id="KW-0436">Ligase</keyword>
<keyword id="KW-0460">Magnesium</keyword>
<keyword id="KW-0464">Manganese</keyword>
<keyword id="KW-0479">Metal-binding</keyword>
<keyword id="KW-0547">Nucleotide-binding</keyword>
<keyword id="KW-0573">Peptidoglycan synthesis</keyword>
<proteinExistence type="inferred from homology"/>
<comment type="function">
    <text evidence="2">Cell wall formation.</text>
</comment>
<comment type="catalytic activity">
    <reaction evidence="2">
        <text>2 D-alanine + ATP = D-alanyl-D-alanine + ADP + phosphate + H(+)</text>
        <dbReference type="Rhea" id="RHEA:11224"/>
        <dbReference type="ChEBI" id="CHEBI:15378"/>
        <dbReference type="ChEBI" id="CHEBI:30616"/>
        <dbReference type="ChEBI" id="CHEBI:43474"/>
        <dbReference type="ChEBI" id="CHEBI:57416"/>
        <dbReference type="ChEBI" id="CHEBI:57822"/>
        <dbReference type="ChEBI" id="CHEBI:456216"/>
        <dbReference type="EC" id="6.3.2.4"/>
    </reaction>
</comment>
<comment type="cofactor">
    <cofactor evidence="1">
        <name>Mg(2+)</name>
        <dbReference type="ChEBI" id="CHEBI:18420"/>
    </cofactor>
    <cofactor evidence="1">
        <name>Mn(2+)</name>
        <dbReference type="ChEBI" id="CHEBI:29035"/>
    </cofactor>
    <text evidence="1">Binds 2 magnesium or manganese ions per subunit.</text>
</comment>
<comment type="pathway">
    <text evidence="2">Cell wall biogenesis; peptidoglycan biosynthesis.</text>
</comment>
<comment type="subcellular location">
    <subcellularLocation>
        <location evidence="2">Cytoplasm</location>
    </subcellularLocation>
</comment>
<comment type="similarity">
    <text evidence="2">Belongs to the D-alanine--D-alanine ligase family.</text>
</comment>
<evidence type="ECO:0000250" key="1"/>
<evidence type="ECO:0000255" key="2">
    <source>
        <dbReference type="HAMAP-Rule" id="MF_00047"/>
    </source>
</evidence>
<organism>
    <name type="scientific">Bordetella petrii (strain ATCC BAA-461 / DSM 12804 / CCUG 43448)</name>
    <dbReference type="NCBI Taxonomy" id="340100"/>
    <lineage>
        <taxon>Bacteria</taxon>
        <taxon>Pseudomonadati</taxon>
        <taxon>Pseudomonadota</taxon>
        <taxon>Betaproteobacteria</taxon>
        <taxon>Burkholderiales</taxon>
        <taxon>Alcaligenaceae</taxon>
        <taxon>Bordetella</taxon>
    </lineage>
</organism>
<feature type="chain" id="PRO_0000341061" description="D-alanine--D-alanine ligase">
    <location>
        <begin position="1"/>
        <end position="326"/>
    </location>
</feature>
<feature type="domain" description="ATP-grasp" evidence="2">
    <location>
        <begin position="114"/>
        <end position="313"/>
    </location>
</feature>
<feature type="binding site" evidence="2">
    <location>
        <begin position="140"/>
        <end position="195"/>
    </location>
    <ligand>
        <name>ATP</name>
        <dbReference type="ChEBI" id="CHEBI:30616"/>
    </ligand>
</feature>
<feature type="binding site" evidence="2">
    <location>
        <position position="267"/>
    </location>
    <ligand>
        <name>Mg(2+)</name>
        <dbReference type="ChEBI" id="CHEBI:18420"/>
        <label>1</label>
    </ligand>
</feature>
<feature type="binding site" evidence="2">
    <location>
        <position position="280"/>
    </location>
    <ligand>
        <name>Mg(2+)</name>
        <dbReference type="ChEBI" id="CHEBI:18420"/>
        <label>1</label>
    </ligand>
</feature>
<feature type="binding site" evidence="2">
    <location>
        <position position="280"/>
    </location>
    <ligand>
        <name>Mg(2+)</name>
        <dbReference type="ChEBI" id="CHEBI:18420"/>
        <label>2</label>
    </ligand>
</feature>
<feature type="binding site" evidence="2">
    <location>
        <position position="282"/>
    </location>
    <ligand>
        <name>Mg(2+)</name>
        <dbReference type="ChEBI" id="CHEBI:18420"/>
        <label>2</label>
    </ligand>
</feature>